<accession>P72233</accession>
<feature type="chain" id="PRO_0000077133" description="Large ribosomal subunit protein uL3">
    <location>
        <begin position="1"/>
        <end position="140" status="greater than"/>
    </location>
</feature>
<feature type="non-terminal residue">
    <location>
        <position position="140"/>
    </location>
</feature>
<reference key="1">
    <citation type="journal article" date="1996" name="Mol. Microbiol.">
        <title>An elongation factor Tu (EF-Tu) resistant to the EF-Tu inhibitor GE2270 in the producing organism Planobispora rosea.</title>
        <authorList>
            <person name="Sosio M."/>
            <person name="Amati G."/>
            <person name="Cappellano C."/>
            <person name="Sarubbi E."/>
            <person name="Monti F."/>
            <person name="Donadio S."/>
        </authorList>
    </citation>
    <scope>NUCLEOTIDE SEQUENCE [GENOMIC DNA]</scope>
    <source>
        <strain>ATCC 53773 / GE2270</strain>
    </source>
</reference>
<dbReference type="EMBL" id="X98830">
    <property type="protein sequence ID" value="CAA67347.1"/>
    <property type="molecule type" value="Genomic_DNA"/>
</dbReference>
<dbReference type="PIR" id="S72630">
    <property type="entry name" value="S72630"/>
</dbReference>
<dbReference type="SMR" id="P72233"/>
<dbReference type="GO" id="GO:0022625">
    <property type="term" value="C:cytosolic large ribosomal subunit"/>
    <property type="evidence" value="ECO:0007669"/>
    <property type="project" value="TreeGrafter"/>
</dbReference>
<dbReference type="GO" id="GO:0019843">
    <property type="term" value="F:rRNA binding"/>
    <property type="evidence" value="ECO:0007669"/>
    <property type="project" value="UniProtKB-KW"/>
</dbReference>
<dbReference type="GO" id="GO:0003735">
    <property type="term" value="F:structural constituent of ribosome"/>
    <property type="evidence" value="ECO:0007669"/>
    <property type="project" value="InterPro"/>
</dbReference>
<dbReference type="GO" id="GO:0006412">
    <property type="term" value="P:translation"/>
    <property type="evidence" value="ECO:0007669"/>
    <property type="project" value="InterPro"/>
</dbReference>
<dbReference type="FunFam" id="3.30.160.810:FF:000001">
    <property type="entry name" value="50S ribosomal protein L3"/>
    <property type="match status" value="1"/>
</dbReference>
<dbReference type="Gene3D" id="4.10.960.10">
    <property type="entry name" value="Ribosomal protein L3, domain 3"/>
    <property type="match status" value="1"/>
</dbReference>
<dbReference type="Gene3D" id="2.40.30.10">
    <property type="entry name" value="Translation factors"/>
    <property type="match status" value="2"/>
</dbReference>
<dbReference type="InterPro" id="IPR044892">
    <property type="entry name" value="Ribosomal_L3_dom_3_arc_sf"/>
</dbReference>
<dbReference type="InterPro" id="IPR000597">
    <property type="entry name" value="Ribosomal_uL3"/>
</dbReference>
<dbReference type="InterPro" id="IPR019927">
    <property type="entry name" value="Ribosomal_uL3_bac/org-type"/>
</dbReference>
<dbReference type="InterPro" id="IPR019926">
    <property type="entry name" value="Ribosomal_uL3_CS"/>
</dbReference>
<dbReference type="InterPro" id="IPR009000">
    <property type="entry name" value="Transl_B-barrel_sf"/>
</dbReference>
<dbReference type="NCBIfam" id="TIGR03625">
    <property type="entry name" value="L3_bact"/>
    <property type="match status" value="1"/>
</dbReference>
<dbReference type="PANTHER" id="PTHR11229">
    <property type="entry name" value="50S RIBOSOMAL PROTEIN L3"/>
    <property type="match status" value="1"/>
</dbReference>
<dbReference type="PANTHER" id="PTHR11229:SF16">
    <property type="entry name" value="LARGE RIBOSOMAL SUBUNIT PROTEIN UL3C"/>
    <property type="match status" value="1"/>
</dbReference>
<dbReference type="Pfam" id="PF00297">
    <property type="entry name" value="Ribosomal_L3"/>
    <property type="match status" value="1"/>
</dbReference>
<dbReference type="SUPFAM" id="SSF50447">
    <property type="entry name" value="Translation proteins"/>
    <property type="match status" value="1"/>
</dbReference>
<dbReference type="PROSITE" id="PS00474">
    <property type="entry name" value="RIBOSOMAL_L3"/>
    <property type="match status" value="1"/>
</dbReference>
<comment type="function">
    <text evidence="1">One of the primary rRNA binding proteins, it binds directly near the 3'-end of the 23S rRNA, where it nucleates assembly of the 50S subunit.</text>
</comment>
<comment type="subunit">
    <text evidence="1">Part of the 50S ribosomal subunit. Forms a cluster with proteins L14 and L19 (By similarity).</text>
</comment>
<comment type="similarity">
    <text evidence="2">Belongs to the universal ribosomal protein uL3 family.</text>
</comment>
<name>RL3_PLARO</name>
<evidence type="ECO:0000250" key="1"/>
<evidence type="ECO:0000305" key="2"/>
<sequence>MAKQIKGVLGKKLGMTQVFDADNRMVPVTVVEAGPCVVTRVRTPEKDGYSAVQLGFGQIDPRKVNKPLGDYLRKHEITPRRYFTEIRTDDASEYTIGQEVLADTFEAGQFVDVTGKSKGKGFAGVMKRHGFGGLGASHGT</sequence>
<organism>
    <name type="scientific">Planobispora rosea</name>
    <dbReference type="NCBI Taxonomy" id="35762"/>
    <lineage>
        <taxon>Bacteria</taxon>
        <taxon>Bacillati</taxon>
        <taxon>Actinomycetota</taxon>
        <taxon>Actinomycetes</taxon>
        <taxon>Streptosporangiales</taxon>
        <taxon>Streptosporangiaceae</taxon>
        <taxon>Planobispora</taxon>
    </lineage>
</organism>
<protein>
    <recommendedName>
        <fullName evidence="2">Large ribosomal subunit protein uL3</fullName>
    </recommendedName>
    <alternativeName>
        <fullName>50S ribosomal protein L3</fullName>
    </alternativeName>
</protein>
<keyword id="KW-0687">Ribonucleoprotein</keyword>
<keyword id="KW-0689">Ribosomal protein</keyword>
<keyword id="KW-0694">RNA-binding</keyword>
<keyword id="KW-0699">rRNA-binding</keyword>
<gene>
    <name type="primary">rplC</name>
</gene>
<proteinExistence type="inferred from homology"/>